<feature type="chain" id="PRO_0000264518" description="DNA-directed RNA polymerase subunit alpha">
    <location>
        <begin position="1"/>
        <end position="317"/>
    </location>
</feature>
<feature type="region of interest" description="Alpha N-terminal domain (alpha-NTD)" evidence="1">
    <location>
        <begin position="1"/>
        <end position="234"/>
    </location>
</feature>
<feature type="region of interest" description="Alpha C-terminal domain (alpha-CTD)" evidence="1">
    <location>
        <begin position="249"/>
        <end position="317"/>
    </location>
</feature>
<proteinExistence type="inferred from homology"/>
<comment type="function">
    <text evidence="1">DNA-dependent RNA polymerase catalyzes the transcription of DNA into RNA using the four ribonucleoside triphosphates as substrates.</text>
</comment>
<comment type="catalytic activity">
    <reaction evidence="1">
        <text>RNA(n) + a ribonucleoside 5'-triphosphate = RNA(n+1) + diphosphate</text>
        <dbReference type="Rhea" id="RHEA:21248"/>
        <dbReference type="Rhea" id="RHEA-COMP:14527"/>
        <dbReference type="Rhea" id="RHEA-COMP:17342"/>
        <dbReference type="ChEBI" id="CHEBI:33019"/>
        <dbReference type="ChEBI" id="CHEBI:61557"/>
        <dbReference type="ChEBI" id="CHEBI:140395"/>
        <dbReference type="EC" id="2.7.7.6"/>
    </reaction>
</comment>
<comment type="subunit">
    <text evidence="1">Homodimer. The RNAP catalytic core consists of 2 alpha, 1 beta, 1 beta' and 1 omega subunit. When a sigma factor is associated with the core the holoenzyme is formed, which can initiate transcription.</text>
</comment>
<comment type="domain">
    <text evidence="1">The N-terminal domain is essential for RNAP assembly and basal transcription, whereas the C-terminal domain is involved in interaction with transcriptional regulators and with upstream promoter elements.</text>
</comment>
<comment type="similarity">
    <text evidence="1">Belongs to the RNA polymerase alpha chain family.</text>
</comment>
<accession>Q2SRH9</accession>
<keyword id="KW-0240">DNA-directed RNA polymerase</keyword>
<keyword id="KW-0548">Nucleotidyltransferase</keyword>
<keyword id="KW-0804">Transcription</keyword>
<keyword id="KW-0808">Transferase</keyword>
<dbReference type="EC" id="2.7.7.6" evidence="1"/>
<dbReference type="EMBL" id="CP000123">
    <property type="protein sequence ID" value="ABC01546.1"/>
    <property type="molecule type" value="Genomic_DNA"/>
</dbReference>
<dbReference type="RefSeq" id="WP_011387528.1">
    <property type="nucleotide sequence ID" value="NC_007633.1"/>
</dbReference>
<dbReference type="SMR" id="Q2SRH9"/>
<dbReference type="GeneID" id="23778375"/>
<dbReference type="KEGG" id="mcp:MCAP_0670"/>
<dbReference type="HOGENOM" id="CLU_053084_0_1_14"/>
<dbReference type="PhylomeDB" id="Q2SRH9"/>
<dbReference type="Proteomes" id="UP000001928">
    <property type="component" value="Chromosome"/>
</dbReference>
<dbReference type="GO" id="GO:0005737">
    <property type="term" value="C:cytoplasm"/>
    <property type="evidence" value="ECO:0007669"/>
    <property type="project" value="UniProtKB-ARBA"/>
</dbReference>
<dbReference type="GO" id="GO:0000428">
    <property type="term" value="C:DNA-directed RNA polymerase complex"/>
    <property type="evidence" value="ECO:0007669"/>
    <property type="project" value="UniProtKB-KW"/>
</dbReference>
<dbReference type="GO" id="GO:0003677">
    <property type="term" value="F:DNA binding"/>
    <property type="evidence" value="ECO:0007669"/>
    <property type="project" value="UniProtKB-UniRule"/>
</dbReference>
<dbReference type="GO" id="GO:0003899">
    <property type="term" value="F:DNA-directed RNA polymerase activity"/>
    <property type="evidence" value="ECO:0007669"/>
    <property type="project" value="UniProtKB-UniRule"/>
</dbReference>
<dbReference type="GO" id="GO:0046983">
    <property type="term" value="F:protein dimerization activity"/>
    <property type="evidence" value="ECO:0007669"/>
    <property type="project" value="InterPro"/>
</dbReference>
<dbReference type="GO" id="GO:0006351">
    <property type="term" value="P:DNA-templated transcription"/>
    <property type="evidence" value="ECO:0007669"/>
    <property type="project" value="UniProtKB-UniRule"/>
</dbReference>
<dbReference type="CDD" id="cd06928">
    <property type="entry name" value="RNAP_alpha_NTD"/>
    <property type="match status" value="1"/>
</dbReference>
<dbReference type="FunFam" id="2.170.120.12:FF:000001">
    <property type="entry name" value="DNA-directed RNA polymerase subunit alpha"/>
    <property type="match status" value="1"/>
</dbReference>
<dbReference type="Gene3D" id="1.10.150.20">
    <property type="entry name" value="5' to 3' exonuclease, C-terminal subdomain"/>
    <property type="match status" value="1"/>
</dbReference>
<dbReference type="Gene3D" id="2.170.120.12">
    <property type="entry name" value="DNA-directed RNA polymerase, insert domain"/>
    <property type="match status" value="1"/>
</dbReference>
<dbReference type="Gene3D" id="3.30.1360.10">
    <property type="entry name" value="RNA polymerase, RBP11-like subunit"/>
    <property type="match status" value="1"/>
</dbReference>
<dbReference type="HAMAP" id="MF_00059">
    <property type="entry name" value="RNApol_bact_RpoA"/>
    <property type="match status" value="1"/>
</dbReference>
<dbReference type="InterPro" id="IPR011262">
    <property type="entry name" value="DNA-dir_RNA_pol_insert"/>
</dbReference>
<dbReference type="InterPro" id="IPR011263">
    <property type="entry name" value="DNA-dir_RNA_pol_RpoA/D/Rpb3"/>
</dbReference>
<dbReference type="InterPro" id="IPR011773">
    <property type="entry name" value="DNA-dir_RpoA"/>
</dbReference>
<dbReference type="InterPro" id="IPR036603">
    <property type="entry name" value="RBP11-like"/>
</dbReference>
<dbReference type="InterPro" id="IPR011260">
    <property type="entry name" value="RNAP_asu_C"/>
</dbReference>
<dbReference type="InterPro" id="IPR036643">
    <property type="entry name" value="RNApol_insert_sf"/>
</dbReference>
<dbReference type="NCBIfam" id="NF003519">
    <property type="entry name" value="PRK05182.2-5"/>
    <property type="match status" value="1"/>
</dbReference>
<dbReference type="NCBIfam" id="TIGR02027">
    <property type="entry name" value="rpoA"/>
    <property type="match status" value="1"/>
</dbReference>
<dbReference type="Pfam" id="PF01000">
    <property type="entry name" value="RNA_pol_A_bac"/>
    <property type="match status" value="1"/>
</dbReference>
<dbReference type="Pfam" id="PF03118">
    <property type="entry name" value="RNA_pol_A_CTD"/>
    <property type="match status" value="1"/>
</dbReference>
<dbReference type="Pfam" id="PF01193">
    <property type="entry name" value="RNA_pol_L"/>
    <property type="match status" value="1"/>
</dbReference>
<dbReference type="SMART" id="SM00662">
    <property type="entry name" value="RPOLD"/>
    <property type="match status" value="1"/>
</dbReference>
<dbReference type="SUPFAM" id="SSF47789">
    <property type="entry name" value="C-terminal domain of RNA polymerase alpha subunit"/>
    <property type="match status" value="1"/>
</dbReference>
<dbReference type="SUPFAM" id="SSF56553">
    <property type="entry name" value="Insert subdomain of RNA polymerase alpha subunit"/>
    <property type="match status" value="1"/>
</dbReference>
<dbReference type="SUPFAM" id="SSF55257">
    <property type="entry name" value="RBP11-like subunits of RNA polymerase"/>
    <property type="match status" value="1"/>
</dbReference>
<evidence type="ECO:0000255" key="1">
    <source>
        <dbReference type="HAMAP-Rule" id="MF_00059"/>
    </source>
</evidence>
<gene>
    <name evidence="1" type="primary">rpoA</name>
    <name type="ordered locus">MCAP_0670</name>
</gene>
<reference key="1">
    <citation type="submission" date="2005-09" db="EMBL/GenBank/DDBJ databases">
        <authorList>
            <person name="Glass J.I."/>
            <person name="Lartigue C."/>
            <person name="Pfannkoch C."/>
            <person name="Baden-Tillson H."/>
            <person name="Smith H.O."/>
            <person name="Venter J.C."/>
            <person name="Roske K."/>
            <person name="Wise K.S."/>
            <person name="Calcutt M.J."/>
            <person name="Nelson W.C."/>
            <person name="Nierman W.C."/>
        </authorList>
    </citation>
    <scope>NUCLEOTIDE SEQUENCE [LARGE SCALE GENOMIC DNA]</scope>
    <source>
        <strain>California kid / ATCC 27343 / NCTC 10154</strain>
    </source>
</reference>
<organism>
    <name type="scientific">Mycoplasma capricolum subsp. capricolum (strain California kid / ATCC 27343 / NCTC 10154)</name>
    <dbReference type="NCBI Taxonomy" id="340047"/>
    <lineage>
        <taxon>Bacteria</taxon>
        <taxon>Bacillati</taxon>
        <taxon>Mycoplasmatota</taxon>
        <taxon>Mollicutes</taxon>
        <taxon>Mycoplasmataceae</taxon>
        <taxon>Mycoplasma</taxon>
    </lineage>
</organism>
<name>RPOA_MYCCT</name>
<sequence length="317" mass="34994">MKQFVRPEFILLKEGQDKNYGKFSVSPLERGFGITLGNAIRRTLLAATPGASVYAIKIAGATHEFTSIPGIIENVTKIILNIKQLVLRIDTSIYSDDEVVQLKIRSDIQGPVYAGDLELPAGVEVLNQDLLIATISEGGILDLVLYAKNSRGYKTFKDNKNEKNIEPGMITIDSNYSPIIKVAYSVDSAKIGRAIDLEKLELEVTTDGSITAIDAISIASKILVAHLEFFIDLNREISVLEVIGVNQTDDKELDRTVEELDFTQRSLNCLKRAGINTLRELVTKNEDEIGSIRNLGRKSLKEIKDKVASLGLAFRQS</sequence>
<protein>
    <recommendedName>
        <fullName evidence="1">DNA-directed RNA polymerase subunit alpha</fullName>
        <shortName evidence="1">RNAP subunit alpha</shortName>
        <ecNumber evidence="1">2.7.7.6</ecNumber>
    </recommendedName>
    <alternativeName>
        <fullName evidence="1">RNA polymerase subunit alpha</fullName>
    </alternativeName>
    <alternativeName>
        <fullName evidence="1">Transcriptase subunit alpha</fullName>
    </alternativeName>
</protein>